<protein>
    <recommendedName>
        <fullName evidence="1">3-deoxy-manno-octulosonate cytidylyltransferase</fullName>
        <ecNumber evidence="1">2.7.7.38</ecNumber>
    </recommendedName>
    <alternativeName>
        <fullName evidence="1">CMP-2-keto-3-deoxyoctulosonic acid synthase</fullName>
        <shortName evidence="1">CKS</shortName>
        <shortName evidence="1">CMP-KDO synthase</shortName>
    </alternativeName>
</protein>
<comment type="function">
    <text evidence="1">Activates KDO (a required 8-carbon sugar) for incorporation into bacterial lipopolysaccharide in Gram-negative bacteria.</text>
</comment>
<comment type="catalytic activity">
    <reaction evidence="1">
        <text>3-deoxy-alpha-D-manno-oct-2-ulosonate + CTP = CMP-3-deoxy-beta-D-manno-octulosonate + diphosphate</text>
        <dbReference type="Rhea" id="RHEA:23448"/>
        <dbReference type="ChEBI" id="CHEBI:33019"/>
        <dbReference type="ChEBI" id="CHEBI:37563"/>
        <dbReference type="ChEBI" id="CHEBI:85986"/>
        <dbReference type="ChEBI" id="CHEBI:85987"/>
        <dbReference type="EC" id="2.7.7.38"/>
    </reaction>
</comment>
<comment type="pathway">
    <text evidence="1">Nucleotide-sugar biosynthesis; CMP-3-deoxy-D-manno-octulosonate biosynthesis; CMP-3-deoxy-D-manno-octulosonate from 3-deoxy-D-manno-octulosonate and CTP: step 1/1.</text>
</comment>
<comment type="pathway">
    <text evidence="1">Bacterial outer membrane biogenesis; lipopolysaccharide biosynthesis.</text>
</comment>
<comment type="subcellular location">
    <subcellularLocation>
        <location evidence="1">Cytoplasm</location>
    </subcellularLocation>
</comment>
<comment type="similarity">
    <text evidence="1">Belongs to the KdsB family.</text>
</comment>
<name>KDSB_HALHL</name>
<gene>
    <name evidence="1" type="primary">kdsB</name>
    <name type="ordered locus">Hhal_1244</name>
</gene>
<proteinExistence type="inferred from homology"/>
<reference key="1">
    <citation type="submission" date="2006-12" db="EMBL/GenBank/DDBJ databases">
        <title>Complete sequence of Halorhodospira halophila SL1.</title>
        <authorList>
            <consortium name="US DOE Joint Genome Institute"/>
            <person name="Copeland A."/>
            <person name="Lucas S."/>
            <person name="Lapidus A."/>
            <person name="Barry K."/>
            <person name="Detter J.C."/>
            <person name="Glavina del Rio T."/>
            <person name="Hammon N."/>
            <person name="Israni S."/>
            <person name="Dalin E."/>
            <person name="Tice H."/>
            <person name="Pitluck S."/>
            <person name="Saunders E."/>
            <person name="Brettin T."/>
            <person name="Bruce D."/>
            <person name="Han C."/>
            <person name="Tapia R."/>
            <person name="Schmutz J."/>
            <person name="Larimer F."/>
            <person name="Land M."/>
            <person name="Hauser L."/>
            <person name="Kyrpides N."/>
            <person name="Mikhailova N."/>
            <person name="Hoff W."/>
            <person name="Richardson P."/>
        </authorList>
    </citation>
    <scope>NUCLEOTIDE SEQUENCE [LARGE SCALE GENOMIC DNA]</scope>
    <source>
        <strain>DSM 244 / SL1</strain>
    </source>
</reference>
<sequence length="257" mass="27872">MSTPAFTVVIPARYGASRLPGKPLADLLGEPVVQHVYRRAVESGAARVVVATDDARIESACRDFGAEVLLTAPDHPTGTDRIAEVVDRLALVDEAIVVNLQGDEPLMPPELVALVAERLDTDPDAAIATLATPVTAADELFEPSVVKVVRDHRDHALYFSRAPVPWDRDRFDGIDDGAVAAGGWLRHLGLYAYRAAFLRRFPGLEPAPPERLESLEQLRALWHGFAIQVAATDQRPGPGVDTPADLEAVARRLQSTR</sequence>
<keyword id="KW-0963">Cytoplasm</keyword>
<keyword id="KW-0448">Lipopolysaccharide biosynthesis</keyword>
<keyword id="KW-0548">Nucleotidyltransferase</keyword>
<keyword id="KW-1185">Reference proteome</keyword>
<keyword id="KW-0808">Transferase</keyword>
<accession>A1WWF7</accession>
<organism>
    <name type="scientific">Halorhodospira halophila (strain DSM 244 / SL1)</name>
    <name type="common">Ectothiorhodospira halophila (strain DSM 244 / SL1)</name>
    <dbReference type="NCBI Taxonomy" id="349124"/>
    <lineage>
        <taxon>Bacteria</taxon>
        <taxon>Pseudomonadati</taxon>
        <taxon>Pseudomonadota</taxon>
        <taxon>Gammaproteobacteria</taxon>
        <taxon>Chromatiales</taxon>
        <taxon>Ectothiorhodospiraceae</taxon>
        <taxon>Halorhodospira</taxon>
    </lineage>
</organism>
<dbReference type="EC" id="2.7.7.38" evidence="1"/>
<dbReference type="EMBL" id="CP000544">
    <property type="protein sequence ID" value="ABM62019.1"/>
    <property type="molecule type" value="Genomic_DNA"/>
</dbReference>
<dbReference type="RefSeq" id="WP_011814042.1">
    <property type="nucleotide sequence ID" value="NC_008789.1"/>
</dbReference>
<dbReference type="SMR" id="A1WWF7"/>
<dbReference type="STRING" id="349124.Hhal_1244"/>
<dbReference type="KEGG" id="hha:Hhal_1244"/>
<dbReference type="eggNOG" id="COG1212">
    <property type="taxonomic scope" value="Bacteria"/>
</dbReference>
<dbReference type="HOGENOM" id="CLU_065038_1_0_6"/>
<dbReference type="OrthoDB" id="9815559at2"/>
<dbReference type="UniPathway" id="UPA00030"/>
<dbReference type="UniPathway" id="UPA00358">
    <property type="reaction ID" value="UER00476"/>
</dbReference>
<dbReference type="Proteomes" id="UP000000647">
    <property type="component" value="Chromosome"/>
</dbReference>
<dbReference type="GO" id="GO:0005829">
    <property type="term" value="C:cytosol"/>
    <property type="evidence" value="ECO:0007669"/>
    <property type="project" value="TreeGrafter"/>
</dbReference>
<dbReference type="GO" id="GO:0008690">
    <property type="term" value="F:3-deoxy-manno-octulosonate cytidylyltransferase activity"/>
    <property type="evidence" value="ECO:0007669"/>
    <property type="project" value="UniProtKB-UniRule"/>
</dbReference>
<dbReference type="GO" id="GO:0033468">
    <property type="term" value="P:CMP-keto-3-deoxy-D-manno-octulosonic acid biosynthetic process"/>
    <property type="evidence" value="ECO:0007669"/>
    <property type="project" value="UniProtKB-UniRule"/>
</dbReference>
<dbReference type="GO" id="GO:0009103">
    <property type="term" value="P:lipopolysaccharide biosynthetic process"/>
    <property type="evidence" value="ECO:0007669"/>
    <property type="project" value="UniProtKB-UniRule"/>
</dbReference>
<dbReference type="CDD" id="cd02517">
    <property type="entry name" value="CMP-KDO-Synthetase"/>
    <property type="match status" value="1"/>
</dbReference>
<dbReference type="FunFam" id="3.90.550.10:FF:000011">
    <property type="entry name" value="3-deoxy-manno-octulosonate cytidylyltransferase"/>
    <property type="match status" value="1"/>
</dbReference>
<dbReference type="Gene3D" id="3.90.550.10">
    <property type="entry name" value="Spore Coat Polysaccharide Biosynthesis Protein SpsA, Chain A"/>
    <property type="match status" value="1"/>
</dbReference>
<dbReference type="HAMAP" id="MF_00057">
    <property type="entry name" value="KdsB"/>
    <property type="match status" value="1"/>
</dbReference>
<dbReference type="InterPro" id="IPR003329">
    <property type="entry name" value="Cytidylyl_trans"/>
</dbReference>
<dbReference type="InterPro" id="IPR004528">
    <property type="entry name" value="KdsB"/>
</dbReference>
<dbReference type="InterPro" id="IPR029044">
    <property type="entry name" value="Nucleotide-diphossugar_trans"/>
</dbReference>
<dbReference type="NCBIfam" id="TIGR00466">
    <property type="entry name" value="kdsB"/>
    <property type="match status" value="1"/>
</dbReference>
<dbReference type="NCBIfam" id="NF003950">
    <property type="entry name" value="PRK05450.1-3"/>
    <property type="match status" value="1"/>
</dbReference>
<dbReference type="NCBIfam" id="NF003952">
    <property type="entry name" value="PRK05450.1-5"/>
    <property type="match status" value="1"/>
</dbReference>
<dbReference type="NCBIfam" id="NF009905">
    <property type="entry name" value="PRK13368.1"/>
    <property type="match status" value="1"/>
</dbReference>
<dbReference type="PANTHER" id="PTHR42866">
    <property type="entry name" value="3-DEOXY-MANNO-OCTULOSONATE CYTIDYLYLTRANSFERASE"/>
    <property type="match status" value="1"/>
</dbReference>
<dbReference type="PANTHER" id="PTHR42866:SF2">
    <property type="entry name" value="3-DEOXY-MANNO-OCTULOSONATE CYTIDYLYLTRANSFERASE, MITOCHONDRIAL"/>
    <property type="match status" value="1"/>
</dbReference>
<dbReference type="Pfam" id="PF02348">
    <property type="entry name" value="CTP_transf_3"/>
    <property type="match status" value="1"/>
</dbReference>
<dbReference type="SUPFAM" id="SSF53448">
    <property type="entry name" value="Nucleotide-diphospho-sugar transferases"/>
    <property type="match status" value="1"/>
</dbReference>
<feature type="chain" id="PRO_0000370077" description="3-deoxy-manno-octulosonate cytidylyltransferase">
    <location>
        <begin position="1"/>
        <end position="257"/>
    </location>
</feature>
<evidence type="ECO:0000255" key="1">
    <source>
        <dbReference type="HAMAP-Rule" id="MF_00057"/>
    </source>
</evidence>